<gene>
    <name type="ordered locus">MIMI_L677</name>
</gene>
<reference key="1">
    <citation type="journal article" date="2004" name="Science">
        <title>The 1.2-megabase genome sequence of Mimivirus.</title>
        <authorList>
            <person name="Raoult D."/>
            <person name="Audic S."/>
            <person name="Robert C."/>
            <person name="Abergel C."/>
            <person name="Renesto P."/>
            <person name="Ogata H."/>
            <person name="La Scola B."/>
            <person name="Susan M."/>
            <person name="Claverie J.-M."/>
        </authorList>
    </citation>
    <scope>NUCLEOTIDE SEQUENCE [LARGE SCALE GENOMIC DNA]</scope>
    <source>
        <strain>Rowbotham-Bradford</strain>
    </source>
</reference>
<name>YL677_MIMIV</name>
<protein>
    <recommendedName>
        <fullName>Putative ankyrin repeat protein L677</fullName>
    </recommendedName>
</protein>
<keyword id="KW-0040">ANK repeat</keyword>
<keyword id="KW-1185">Reference proteome</keyword>
<keyword id="KW-0677">Repeat</keyword>
<organismHost>
    <name type="scientific">Acanthamoeba polyphaga</name>
    <name type="common">Amoeba</name>
    <dbReference type="NCBI Taxonomy" id="5757"/>
</organismHost>
<accession>Q5UNT9</accession>
<organism>
    <name type="scientific">Acanthamoeba polyphaga mimivirus</name>
    <name type="common">APMV</name>
    <dbReference type="NCBI Taxonomy" id="212035"/>
    <lineage>
        <taxon>Viruses</taxon>
        <taxon>Varidnaviria</taxon>
        <taxon>Bamfordvirae</taxon>
        <taxon>Nucleocytoviricota</taxon>
        <taxon>Megaviricetes</taxon>
        <taxon>Imitervirales</taxon>
        <taxon>Mimiviridae</taxon>
        <taxon>Megamimivirinae</taxon>
        <taxon>Mimivirus</taxon>
        <taxon>Mimivirus bradfordmassiliense</taxon>
    </lineage>
</organism>
<sequence length="104" mass="11875">MNIVMFFFDNYMFSDFNKSSLEIACIENDIGTVKKIINLNPNLDISHCLNLAIESKNYQIVKFLLKKNISNSVLLEAYDCACINGKISIMELLIQYLNNKSIVS</sequence>
<dbReference type="EMBL" id="AY653733">
    <property type="protein sequence ID" value="AAV50938.1"/>
    <property type="molecule type" value="Genomic_DNA"/>
</dbReference>
<dbReference type="SMR" id="Q5UNT9"/>
<dbReference type="KEGG" id="vg:9925325"/>
<dbReference type="Proteomes" id="UP000001134">
    <property type="component" value="Genome"/>
</dbReference>
<dbReference type="Gene3D" id="1.25.40.20">
    <property type="entry name" value="Ankyrin repeat-containing domain"/>
    <property type="match status" value="1"/>
</dbReference>
<dbReference type="InterPro" id="IPR002110">
    <property type="entry name" value="Ankyrin_rpt"/>
</dbReference>
<dbReference type="InterPro" id="IPR036770">
    <property type="entry name" value="Ankyrin_rpt-contain_sf"/>
</dbReference>
<dbReference type="Pfam" id="PF12796">
    <property type="entry name" value="Ank_2"/>
    <property type="match status" value="1"/>
</dbReference>
<dbReference type="SUPFAM" id="SSF48403">
    <property type="entry name" value="Ankyrin repeat"/>
    <property type="match status" value="1"/>
</dbReference>
<feature type="chain" id="PRO_0000067186" description="Putative ankyrin repeat protein L677">
    <location>
        <begin position="1"/>
        <end position="104"/>
    </location>
</feature>
<feature type="repeat" description="ANK 1">
    <location>
        <begin position="16"/>
        <end position="43"/>
    </location>
</feature>
<feature type="repeat" description="ANK 2">
    <location>
        <begin position="44"/>
        <end position="73"/>
    </location>
</feature>
<feature type="repeat" description="ANK 3">
    <location>
        <begin position="75"/>
        <end position="102"/>
    </location>
</feature>
<proteinExistence type="predicted"/>